<protein>
    <recommendedName>
        <fullName>Blarinasin-1</fullName>
        <ecNumber>3.4.21.-</ecNumber>
    </recommendedName>
    <alternativeName>
        <fullName>Kallikrein-1</fullName>
    </alternativeName>
</protein>
<comment type="function">
    <text evidence="4">A kallikrein-like protease. It preferentially converts human high-molecular-weight kininogen (HK) to bradykinin. Displays broad substrate specificity in vitro, with highest activity toward Boc-Val-Leu-Lys-MCA, Boc-Glu-Lys-Lys-MCA, Boc-Glu(OBzl)-Ala-Arg-MCA, Boc-Val-Pro-Arg-MCA, ZPhe-Arg-MCA and Pro-Phe-Arg-MCA. Has preference for Arg and Lys in position P1 and hydrophobic residues in position P2. Is not toxic to mice.</text>
</comment>
<comment type="activity regulation">
    <text evidence="4">Strongly inhibited by aprotinin, moderately inhibited by secretory leukoprotease inhibitor (SLPI), leupeptin, benzamidine, and phenylmethanesulfonyl fluoride (PMSF), weakly inhibited by urinary trypsin inhibitor, and Kunitz-type soybean trypsin inhibitor and not inhibited by EDTA and alpha-1 protease inhibitor.</text>
</comment>
<comment type="biophysicochemical properties">
    <phDependence>
        <text evidence="4">Optimum pH is 8.5.</text>
    </phDependence>
</comment>
<comment type="subcellular location">
    <subcellularLocation>
        <location evidence="4">Secreted</location>
    </subcellularLocation>
</comment>
<comment type="tissue specificity">
    <text evidence="4">Submaxillary and sublingual salivary glands.</text>
</comment>
<comment type="similarity">
    <text evidence="3">Belongs to the peptidase S1 family. Kallikrein subfamily.</text>
</comment>
<accession>Q5FBW2</accession>
<proteinExistence type="evidence at protein level"/>
<sequence length="280" mass="30963">YLLLLCLPLTLMGTGAVPPGPSIEIHPRIVGGWECDKHSQPWQALLTFTNGLDGVCGGVLVHPQWVLTAAHCIGDNYKIKLGLHDRFSKDDPFQEFQVSASFPHPSYNMRLLKLLLSDELNDTYYDEISLGADFSHDLMMMQLEKPVQLNDAVQVLDLPTQEPQVGSKCHASGWGSMDPYSRNFPRTGKLQCVDLTLMSNNECSRSHIFKITDDMLCAGHIKGRKDTCGGDSGGPLICDGVFQGTTSWGSYPCGKPRTPGVYVKIFSHVDWIREIIATHS</sequence>
<keyword id="KW-0903">Direct protein sequencing</keyword>
<keyword id="KW-1015">Disulfide bond</keyword>
<keyword id="KW-0325">Glycoprotein</keyword>
<keyword id="KW-0378">Hydrolase</keyword>
<keyword id="KW-0645">Protease</keyword>
<keyword id="KW-0964">Secreted</keyword>
<keyword id="KW-0720">Serine protease</keyword>
<keyword id="KW-0732">Signal</keyword>
<keyword id="KW-0865">Zymogen</keyword>
<reference key="1">
    <citation type="journal article" date="2005" name="Biol. Chem.">
        <title>Purification and characterisation of blarinasin, a new tissue kallikrein-like protease from the short-tailed shrew Blarina brevicauda: comparative studies with blarina toxin.</title>
        <authorList>
            <person name="Kita M."/>
            <person name="Okumura Y."/>
            <person name="Ohdachi S.D."/>
            <person name="Oba Y."/>
            <person name="Yoshikuni M."/>
            <person name="Nakamura Y."/>
            <person name="Kido H."/>
            <person name="Uemura D."/>
        </authorList>
    </citation>
    <scope>NUCLEOTIDE SEQUENCE [MRNA]</scope>
    <scope>PROTEIN SEQUENCE OF 29-43</scope>
    <scope>FUNCTION</scope>
    <scope>CATALYTIC ACTIVITY</scope>
    <scope>ACTIVITY REGULATION</scope>
    <scope>BIOPHYSICOCHEMICAL PROPERTIES</scope>
    <scope>SUBCELLULAR LOCATION</scope>
    <scope>TISSUE SPECIFICITY</scope>
    <source>
        <tissue>Saliva</tissue>
        <tissue>Salivary gland</tissue>
    </source>
</reference>
<feature type="signal peptide" evidence="2">
    <location>
        <begin position="1" status="less than"/>
        <end position="16"/>
    </location>
</feature>
<feature type="propeptide" id="PRO_0000288940" evidence="4">
    <location>
        <begin position="17"/>
        <end position="28"/>
    </location>
</feature>
<feature type="chain" id="PRO_0000288941" description="Blarinasin-1">
    <location>
        <begin position="29"/>
        <end position="280"/>
    </location>
</feature>
<feature type="domain" description="Peptidase S1" evidence="3">
    <location>
        <begin position="29"/>
        <end position="277"/>
    </location>
</feature>
<feature type="active site" description="Charge relay system" evidence="1">
    <location>
        <position position="71"/>
    </location>
</feature>
<feature type="active site" description="Charge relay system" evidence="1">
    <location>
        <position position="137"/>
    </location>
</feature>
<feature type="active site" description="Charge relay system" evidence="1">
    <location>
        <position position="232"/>
    </location>
</feature>
<feature type="glycosylation site" description="O-linked (GalNAc...) serine" evidence="1">
    <location>
        <position position="99"/>
    </location>
</feature>
<feature type="glycosylation site" description="N-linked (GlcNAc...) asparagine" evidence="5">
    <location>
        <position position="121"/>
    </location>
</feature>
<feature type="disulfide bond" evidence="3">
    <location>
        <begin position="35"/>
        <end position="192"/>
    </location>
</feature>
<feature type="disulfide bond" evidence="3">
    <location>
        <begin position="56"/>
        <end position="72"/>
    </location>
</feature>
<feature type="disulfide bond" evidence="3">
    <location>
        <begin position="169"/>
        <end position="238"/>
    </location>
</feature>
<feature type="disulfide bond" evidence="3">
    <location>
        <begin position="203"/>
        <end position="217"/>
    </location>
</feature>
<feature type="disulfide bond" evidence="3">
    <location>
        <begin position="228"/>
        <end position="253"/>
    </location>
</feature>
<feature type="non-terminal residue">
    <location>
        <position position="1"/>
    </location>
</feature>
<evidence type="ECO:0000250" key="1"/>
<evidence type="ECO:0000255" key="2"/>
<evidence type="ECO:0000255" key="3">
    <source>
        <dbReference type="PROSITE-ProRule" id="PRU00274"/>
    </source>
</evidence>
<evidence type="ECO:0000269" key="4">
    <source>
    </source>
</evidence>
<evidence type="ECO:0000305" key="5"/>
<dbReference type="EC" id="3.4.21.-"/>
<dbReference type="EMBL" id="AB105055">
    <property type="protein sequence ID" value="BAD89851.1"/>
    <property type="molecule type" value="mRNA"/>
</dbReference>
<dbReference type="SMR" id="Q5FBW2"/>
<dbReference type="MEROPS" id="S01.452"/>
<dbReference type="GlyCosmos" id="Q5FBW2">
    <property type="glycosylation" value="2 sites, No reported glycans"/>
</dbReference>
<dbReference type="GO" id="GO:0005576">
    <property type="term" value="C:extracellular region"/>
    <property type="evidence" value="ECO:0007669"/>
    <property type="project" value="UniProtKB-SubCell"/>
</dbReference>
<dbReference type="GO" id="GO:0030141">
    <property type="term" value="C:secretory granule"/>
    <property type="evidence" value="ECO:0007669"/>
    <property type="project" value="TreeGrafter"/>
</dbReference>
<dbReference type="GO" id="GO:0004252">
    <property type="term" value="F:serine-type endopeptidase activity"/>
    <property type="evidence" value="ECO:0007669"/>
    <property type="project" value="InterPro"/>
</dbReference>
<dbReference type="GO" id="GO:0003073">
    <property type="term" value="P:regulation of systemic arterial blood pressure"/>
    <property type="evidence" value="ECO:0007669"/>
    <property type="project" value="TreeGrafter"/>
</dbReference>
<dbReference type="GO" id="GO:0031638">
    <property type="term" value="P:zymogen activation"/>
    <property type="evidence" value="ECO:0007669"/>
    <property type="project" value="TreeGrafter"/>
</dbReference>
<dbReference type="CDD" id="cd00190">
    <property type="entry name" value="Tryp_SPc"/>
    <property type="match status" value="1"/>
</dbReference>
<dbReference type="FunFam" id="2.40.10.10:FF:000010">
    <property type="entry name" value="Kallikrein related peptidase 11"/>
    <property type="match status" value="1"/>
</dbReference>
<dbReference type="Gene3D" id="2.40.10.10">
    <property type="entry name" value="Trypsin-like serine proteases"/>
    <property type="match status" value="2"/>
</dbReference>
<dbReference type="InterPro" id="IPR009003">
    <property type="entry name" value="Peptidase_S1_PA"/>
</dbReference>
<dbReference type="InterPro" id="IPR043504">
    <property type="entry name" value="Peptidase_S1_PA_chymotrypsin"/>
</dbReference>
<dbReference type="InterPro" id="IPR001314">
    <property type="entry name" value="Peptidase_S1A"/>
</dbReference>
<dbReference type="InterPro" id="IPR001254">
    <property type="entry name" value="Trypsin_dom"/>
</dbReference>
<dbReference type="InterPro" id="IPR018114">
    <property type="entry name" value="TRYPSIN_HIS"/>
</dbReference>
<dbReference type="InterPro" id="IPR033116">
    <property type="entry name" value="TRYPSIN_SER"/>
</dbReference>
<dbReference type="PANTHER" id="PTHR24271:SF47">
    <property type="entry name" value="KALLIKREIN-1"/>
    <property type="match status" value="1"/>
</dbReference>
<dbReference type="PANTHER" id="PTHR24271">
    <property type="entry name" value="KALLIKREIN-RELATED"/>
    <property type="match status" value="1"/>
</dbReference>
<dbReference type="Pfam" id="PF00089">
    <property type="entry name" value="Trypsin"/>
    <property type="match status" value="1"/>
</dbReference>
<dbReference type="PRINTS" id="PR00722">
    <property type="entry name" value="CHYMOTRYPSIN"/>
</dbReference>
<dbReference type="SMART" id="SM00020">
    <property type="entry name" value="Tryp_SPc"/>
    <property type="match status" value="1"/>
</dbReference>
<dbReference type="SUPFAM" id="SSF50494">
    <property type="entry name" value="Trypsin-like serine proteases"/>
    <property type="match status" value="1"/>
</dbReference>
<dbReference type="PROSITE" id="PS50240">
    <property type="entry name" value="TRYPSIN_DOM"/>
    <property type="match status" value="1"/>
</dbReference>
<dbReference type="PROSITE" id="PS00134">
    <property type="entry name" value="TRYPSIN_HIS"/>
    <property type="match status" value="1"/>
</dbReference>
<dbReference type="PROSITE" id="PS00135">
    <property type="entry name" value="TRYPSIN_SER"/>
    <property type="match status" value="1"/>
</dbReference>
<gene>
    <name type="primary">KLK1</name>
</gene>
<organism>
    <name type="scientific">Blarina brevicauda</name>
    <name type="common">Northern short-tailed shrew</name>
    <dbReference type="NCBI Taxonomy" id="9387"/>
    <lineage>
        <taxon>Eukaryota</taxon>
        <taxon>Metazoa</taxon>
        <taxon>Chordata</taxon>
        <taxon>Craniata</taxon>
        <taxon>Vertebrata</taxon>
        <taxon>Euteleostomi</taxon>
        <taxon>Mammalia</taxon>
        <taxon>Eutheria</taxon>
        <taxon>Laurasiatheria</taxon>
        <taxon>Eulipotyphla</taxon>
        <taxon>Soricidae</taxon>
        <taxon>Soricinae</taxon>
        <taxon>Blarina</taxon>
    </lineage>
</organism>
<name>KLK1_BLABR</name>